<reference key="1">
    <citation type="journal article" date="1996" name="EMBO J.">
        <title>Complete nucleotide sequence of Saccharomyces cerevisiae chromosome X.</title>
        <authorList>
            <person name="Galibert F."/>
            <person name="Alexandraki D."/>
            <person name="Baur A."/>
            <person name="Boles E."/>
            <person name="Chalwatzis N."/>
            <person name="Chuat J.-C."/>
            <person name="Coster F."/>
            <person name="Cziepluch C."/>
            <person name="de Haan M."/>
            <person name="Domdey H."/>
            <person name="Durand P."/>
            <person name="Entian K.-D."/>
            <person name="Gatius M."/>
            <person name="Goffeau A."/>
            <person name="Grivell L.A."/>
            <person name="Hennemann A."/>
            <person name="Herbert C.J."/>
            <person name="Heumann K."/>
            <person name="Hilger F."/>
            <person name="Hollenberg C.P."/>
            <person name="Huang M.-E."/>
            <person name="Jacq C."/>
            <person name="Jauniaux J.-C."/>
            <person name="Katsoulou C."/>
            <person name="Kirchrath L."/>
            <person name="Kleine K."/>
            <person name="Kordes E."/>
            <person name="Koetter P."/>
            <person name="Liebl S."/>
            <person name="Louis E.J."/>
            <person name="Manus V."/>
            <person name="Mewes H.-W."/>
            <person name="Miosga T."/>
            <person name="Obermaier B."/>
            <person name="Perea J."/>
            <person name="Pohl T.M."/>
            <person name="Portetelle D."/>
            <person name="Pujol A."/>
            <person name="Purnelle B."/>
            <person name="Ramezani Rad M."/>
            <person name="Rasmussen S.W."/>
            <person name="Rose M."/>
            <person name="Rossau R."/>
            <person name="Schaaff-Gerstenschlaeger I."/>
            <person name="Smits P.H.M."/>
            <person name="Scarcez T."/>
            <person name="Soriano N."/>
            <person name="To Van D."/>
            <person name="Tzermia M."/>
            <person name="Van Broekhoven A."/>
            <person name="Vandenbol M."/>
            <person name="Wedler H."/>
            <person name="von Wettstein D."/>
            <person name="Wambutt R."/>
            <person name="Zagulski M."/>
            <person name="Zollner A."/>
            <person name="Karpfinger-Hartl L."/>
        </authorList>
    </citation>
    <scope>NUCLEOTIDE SEQUENCE [LARGE SCALE GENOMIC DNA]</scope>
    <source>
        <strain>ATCC 204508 / S288c</strain>
    </source>
</reference>
<reference key="2">
    <citation type="journal article" date="2014" name="G3 (Bethesda)">
        <title>The reference genome sequence of Saccharomyces cerevisiae: Then and now.</title>
        <authorList>
            <person name="Engel S.R."/>
            <person name="Dietrich F.S."/>
            <person name="Fisk D.G."/>
            <person name="Binkley G."/>
            <person name="Balakrishnan R."/>
            <person name="Costanzo M.C."/>
            <person name="Dwight S.S."/>
            <person name="Hitz B.C."/>
            <person name="Karra K."/>
            <person name="Nash R.S."/>
            <person name="Weng S."/>
            <person name="Wong E.D."/>
            <person name="Lloyd P."/>
            <person name="Skrzypek M.S."/>
            <person name="Miyasato S.R."/>
            <person name="Simison M."/>
            <person name="Cherry J.M."/>
        </authorList>
    </citation>
    <scope>GENOME REANNOTATION</scope>
    <source>
        <strain>ATCC 204508 / S288c</strain>
    </source>
</reference>
<reference key="3">
    <citation type="journal article" date="2007" name="Genome Res.">
        <title>Approaching a complete repository of sequence-verified protein-encoding clones for Saccharomyces cerevisiae.</title>
        <authorList>
            <person name="Hu Y."/>
            <person name="Rolfs A."/>
            <person name="Bhullar B."/>
            <person name="Murthy T.V.S."/>
            <person name="Zhu C."/>
            <person name="Berger M.F."/>
            <person name="Camargo A.A."/>
            <person name="Kelley F."/>
            <person name="McCarron S."/>
            <person name="Jepson D."/>
            <person name="Richardson A."/>
            <person name="Raphael J."/>
            <person name="Moreira D."/>
            <person name="Taycher E."/>
            <person name="Zuo D."/>
            <person name="Mohr S."/>
            <person name="Kane M.F."/>
            <person name="Williamson J."/>
            <person name="Simpson A.J.G."/>
            <person name="Bulyk M.L."/>
            <person name="Harlow E."/>
            <person name="Marsischky G."/>
            <person name="Kolodner R.D."/>
            <person name="LaBaer J."/>
        </authorList>
    </citation>
    <scope>NUCLEOTIDE SEQUENCE [GENOMIC DNA]</scope>
    <source>
        <strain>ATCC 204508 / S288c</strain>
    </source>
</reference>
<reference key="4">
    <citation type="journal article" date="1999" name="Mol. Gen. Genet.">
        <title>Functional analysis of 150 deletion mutants in Saccharomyces cerevisiae by a systematic approach.</title>
        <authorList>
            <person name="Entian K.-D."/>
            <person name="Schuster T."/>
            <person name="Hegemann J.H."/>
            <person name="Becher D."/>
            <person name="Feldmann H."/>
            <person name="Gueldener U."/>
            <person name="Goetz R."/>
            <person name="Hansen M."/>
            <person name="Hollenberg C.P."/>
            <person name="Jansen G."/>
            <person name="Kramer W."/>
            <person name="Klein S."/>
            <person name="Koetter P."/>
            <person name="Kricke J."/>
            <person name="Launhardt H."/>
            <person name="Mannhaupt G."/>
            <person name="Maierl A."/>
            <person name="Meyer P."/>
            <person name="Mewes W."/>
            <person name="Munder T."/>
            <person name="Niedenthal R.K."/>
            <person name="Ramezani Rad M."/>
            <person name="Roehmer A."/>
            <person name="Roemer A."/>
            <person name="Rose M."/>
            <person name="Schaefer B."/>
            <person name="Siegler M.-L."/>
            <person name="Vetter J."/>
            <person name="Wilhelm N."/>
            <person name="Wolf K."/>
            <person name="Zimmermann F.K."/>
            <person name="Zollner A."/>
            <person name="Hinnen A."/>
        </authorList>
    </citation>
    <scope>DISRUPTION PHENOTYPE</scope>
    <scope>FUNCTION</scope>
</reference>
<proteinExistence type="predicted"/>
<name>ABM1_YEAST</name>
<protein>
    <recommendedName>
        <fullName>Aberrant microtubules protein 1</fullName>
    </recommendedName>
</protein>
<comment type="function">
    <text evidence="1">Required for normal microtubule organization.</text>
</comment>
<comment type="disruption phenotype">
    <text evidence="1">Microtubules are shorter than normal.</text>
</comment>
<evidence type="ECO:0000269" key="1">
    <source>
    </source>
</evidence>
<dbReference type="EMBL" id="Z49608">
    <property type="protein sequence ID" value="CAA89638.1"/>
    <property type="molecule type" value="Genomic_DNA"/>
</dbReference>
<dbReference type="EMBL" id="AY558255">
    <property type="protein sequence ID" value="AAS56581.1"/>
    <property type="molecule type" value="Genomic_DNA"/>
</dbReference>
<dbReference type="EMBL" id="BK006943">
    <property type="protein sequence ID" value="DAA08893.1"/>
    <property type="molecule type" value="Genomic_DNA"/>
</dbReference>
<dbReference type="PIR" id="S57129">
    <property type="entry name" value="S57129"/>
</dbReference>
<dbReference type="RefSeq" id="NP_012642.1">
    <property type="nucleotide sequence ID" value="NM_001181766.1"/>
</dbReference>
<dbReference type="BioGRID" id="33864">
    <property type="interactions" value="36"/>
</dbReference>
<dbReference type="DIP" id="DIP-5043N"/>
<dbReference type="FunCoup" id="P47146">
    <property type="interactions" value="42"/>
</dbReference>
<dbReference type="IntAct" id="P47146">
    <property type="interactions" value="6"/>
</dbReference>
<dbReference type="MINT" id="P47146"/>
<dbReference type="STRING" id="4932.YJR108W"/>
<dbReference type="PaxDb" id="4932-YJR108W"/>
<dbReference type="EnsemblFungi" id="YJR108W_mRNA">
    <property type="protein sequence ID" value="YJR108W"/>
    <property type="gene ID" value="YJR108W"/>
</dbReference>
<dbReference type="GeneID" id="853572"/>
<dbReference type="KEGG" id="sce:YJR108W"/>
<dbReference type="AGR" id="SGD:S000003869"/>
<dbReference type="SGD" id="S000003869">
    <property type="gene designation" value="ABM1"/>
</dbReference>
<dbReference type="VEuPathDB" id="FungiDB:YJR108W"/>
<dbReference type="HOGENOM" id="CLU_1950055_0_0_1"/>
<dbReference type="InParanoid" id="P47146"/>
<dbReference type="OrthoDB" id="4058982at2759"/>
<dbReference type="BioCyc" id="YEAST:G3O-31732-MONOMER"/>
<dbReference type="BioGRID-ORCS" id="853572">
    <property type="hits" value="0 hits in 10 CRISPR screens"/>
</dbReference>
<dbReference type="PRO" id="PR:P47146"/>
<dbReference type="Proteomes" id="UP000002311">
    <property type="component" value="Chromosome X"/>
</dbReference>
<dbReference type="RNAct" id="P47146">
    <property type="molecule type" value="protein"/>
</dbReference>
<dbReference type="GO" id="GO:0000226">
    <property type="term" value="P:microtubule cytoskeleton organization"/>
    <property type="evidence" value="ECO:0000315"/>
    <property type="project" value="SGD"/>
</dbReference>
<organism>
    <name type="scientific">Saccharomyces cerevisiae (strain ATCC 204508 / S288c)</name>
    <name type="common">Baker's yeast</name>
    <dbReference type="NCBI Taxonomy" id="559292"/>
    <lineage>
        <taxon>Eukaryota</taxon>
        <taxon>Fungi</taxon>
        <taxon>Dikarya</taxon>
        <taxon>Ascomycota</taxon>
        <taxon>Saccharomycotina</taxon>
        <taxon>Saccharomycetes</taxon>
        <taxon>Saccharomycetales</taxon>
        <taxon>Saccharomycetaceae</taxon>
        <taxon>Saccharomyces</taxon>
    </lineage>
</organism>
<feature type="chain" id="PRO_0000203111" description="Aberrant microtubules protein 1">
    <location>
        <begin position="1"/>
        <end position="123"/>
    </location>
</feature>
<accession>P47146</accession>
<accession>D6VWS7</accession>
<sequence length="123" mass="14204">MSWRYSILTVDGSFKIFIPWEIFLTWNFLSAAWLNSTESNTYIHYSTCWGTSDYTLNISVIEATTEKLVDTRLLTTLENATAWINSNSIDEDEDDMPHATNVADRLDGLSLSKRVYSICHYEF</sequence>
<gene>
    <name type="primary">ABM1</name>
    <name type="ordered locus">YJR108W</name>
    <name type="ORF">J1988</name>
</gene>
<keyword id="KW-1185">Reference proteome</keyword>